<sequence>MVAKILDGKQIAKDYRQGLQDQVEALKEKGFTPKLSVILVGNDGASQSYVRSKKKAAEKIGMISEIVHLEETATEEEVLNELNRLNNDDSVSGILVQVPLPKQVSEQKILEAINPEKDVDGFHPINIGKLYIDEQTFVPCTPLGIMEILKHADIDLEAKNAVVIGRSHIVGQPVSKLLLQKNASVTILHSRSKDMASYLKDADVIVSAVGKPSLVTKDVVKEGAVIIDVGNTPDENGKLKGDVDYDAVKEIAGAITPVPGGVGPLTITMVLNNTLLAEKMRRGIDS</sequence>
<protein>
    <recommendedName>
        <fullName evidence="1">Bifunctional protein FolD</fullName>
    </recommendedName>
    <domain>
        <recommendedName>
            <fullName evidence="1">Methylenetetrahydrofolate dehydrogenase</fullName>
            <ecNumber evidence="1">1.5.1.5</ecNumber>
        </recommendedName>
    </domain>
    <domain>
        <recommendedName>
            <fullName evidence="1">Methenyltetrahydrofolate cyclohydrolase</fullName>
            <ecNumber evidence="1">3.5.4.9</ecNumber>
        </recommendedName>
    </domain>
</protein>
<feature type="chain" id="PRO_0000265947" description="Bifunctional protein FolD">
    <location>
        <begin position="1"/>
        <end position="286"/>
    </location>
</feature>
<feature type="binding site" evidence="1">
    <location>
        <begin position="165"/>
        <end position="167"/>
    </location>
    <ligand>
        <name>NADP(+)</name>
        <dbReference type="ChEBI" id="CHEBI:58349"/>
    </ligand>
</feature>
<feature type="binding site" evidence="1">
    <location>
        <position position="190"/>
    </location>
    <ligand>
        <name>NADP(+)</name>
        <dbReference type="ChEBI" id="CHEBI:58349"/>
    </ligand>
</feature>
<comment type="function">
    <text evidence="1">Catalyzes the oxidation of 5,10-methylenetetrahydrofolate to 5,10-methenyltetrahydrofolate and then the hydrolysis of 5,10-methenyltetrahydrofolate to 10-formyltetrahydrofolate.</text>
</comment>
<comment type="catalytic activity">
    <reaction evidence="1">
        <text>(6R)-5,10-methylene-5,6,7,8-tetrahydrofolate + NADP(+) = (6R)-5,10-methenyltetrahydrofolate + NADPH</text>
        <dbReference type="Rhea" id="RHEA:22812"/>
        <dbReference type="ChEBI" id="CHEBI:15636"/>
        <dbReference type="ChEBI" id="CHEBI:57455"/>
        <dbReference type="ChEBI" id="CHEBI:57783"/>
        <dbReference type="ChEBI" id="CHEBI:58349"/>
        <dbReference type="EC" id="1.5.1.5"/>
    </reaction>
</comment>
<comment type="catalytic activity">
    <reaction evidence="1">
        <text>(6R)-5,10-methenyltetrahydrofolate + H2O = (6R)-10-formyltetrahydrofolate + H(+)</text>
        <dbReference type="Rhea" id="RHEA:23700"/>
        <dbReference type="ChEBI" id="CHEBI:15377"/>
        <dbReference type="ChEBI" id="CHEBI:15378"/>
        <dbReference type="ChEBI" id="CHEBI:57455"/>
        <dbReference type="ChEBI" id="CHEBI:195366"/>
        <dbReference type="EC" id="3.5.4.9"/>
    </reaction>
</comment>
<comment type="pathway">
    <text evidence="1">One-carbon metabolism; tetrahydrofolate interconversion.</text>
</comment>
<comment type="subunit">
    <text evidence="1">Homodimer.</text>
</comment>
<comment type="similarity">
    <text evidence="1">Belongs to the tetrahydrofolate dehydrogenase/cyclohydrolase family.</text>
</comment>
<evidence type="ECO:0000255" key="1">
    <source>
        <dbReference type="HAMAP-Rule" id="MF_01576"/>
    </source>
</evidence>
<organism>
    <name type="scientific">Staphylococcus aureus (strain N315)</name>
    <dbReference type="NCBI Taxonomy" id="158879"/>
    <lineage>
        <taxon>Bacteria</taxon>
        <taxon>Bacillati</taxon>
        <taxon>Bacillota</taxon>
        <taxon>Bacilli</taxon>
        <taxon>Bacillales</taxon>
        <taxon>Staphylococcaceae</taxon>
        <taxon>Staphylococcus</taxon>
    </lineage>
</organism>
<keyword id="KW-0028">Amino-acid biosynthesis</keyword>
<keyword id="KW-0368">Histidine biosynthesis</keyword>
<keyword id="KW-0378">Hydrolase</keyword>
<keyword id="KW-0486">Methionine biosynthesis</keyword>
<keyword id="KW-0511">Multifunctional enzyme</keyword>
<keyword id="KW-0521">NADP</keyword>
<keyword id="KW-0554">One-carbon metabolism</keyword>
<keyword id="KW-0560">Oxidoreductase</keyword>
<keyword id="KW-0658">Purine biosynthesis</keyword>
<dbReference type="EC" id="1.5.1.5" evidence="1"/>
<dbReference type="EC" id="3.5.4.9" evidence="1"/>
<dbReference type="EMBL" id="BA000018">
    <property type="protein sequence ID" value="BAB42160.1"/>
    <property type="molecule type" value="Genomic_DNA"/>
</dbReference>
<dbReference type="PIR" id="E89875">
    <property type="entry name" value="E89875"/>
</dbReference>
<dbReference type="RefSeq" id="WP_000225836.1">
    <property type="nucleotide sequence ID" value="NC_002745.2"/>
</dbReference>
<dbReference type="SMR" id="Q7A697"/>
<dbReference type="EnsemblBacteria" id="BAB42160">
    <property type="protein sequence ID" value="BAB42160"/>
    <property type="gene ID" value="BAB42160"/>
</dbReference>
<dbReference type="KEGG" id="sau:SA0915"/>
<dbReference type="HOGENOM" id="CLU_034045_2_1_9"/>
<dbReference type="UniPathway" id="UPA00193"/>
<dbReference type="GO" id="GO:0005829">
    <property type="term" value="C:cytosol"/>
    <property type="evidence" value="ECO:0007669"/>
    <property type="project" value="TreeGrafter"/>
</dbReference>
<dbReference type="GO" id="GO:0004477">
    <property type="term" value="F:methenyltetrahydrofolate cyclohydrolase activity"/>
    <property type="evidence" value="ECO:0007669"/>
    <property type="project" value="UniProtKB-UniRule"/>
</dbReference>
<dbReference type="GO" id="GO:0004488">
    <property type="term" value="F:methylenetetrahydrofolate dehydrogenase (NADP+) activity"/>
    <property type="evidence" value="ECO:0007669"/>
    <property type="project" value="UniProtKB-UniRule"/>
</dbReference>
<dbReference type="GO" id="GO:0000105">
    <property type="term" value="P:L-histidine biosynthetic process"/>
    <property type="evidence" value="ECO:0007669"/>
    <property type="project" value="UniProtKB-KW"/>
</dbReference>
<dbReference type="GO" id="GO:0009086">
    <property type="term" value="P:methionine biosynthetic process"/>
    <property type="evidence" value="ECO:0007669"/>
    <property type="project" value="UniProtKB-KW"/>
</dbReference>
<dbReference type="GO" id="GO:0006164">
    <property type="term" value="P:purine nucleotide biosynthetic process"/>
    <property type="evidence" value="ECO:0007669"/>
    <property type="project" value="UniProtKB-KW"/>
</dbReference>
<dbReference type="GO" id="GO:0035999">
    <property type="term" value="P:tetrahydrofolate interconversion"/>
    <property type="evidence" value="ECO:0007669"/>
    <property type="project" value="UniProtKB-UniRule"/>
</dbReference>
<dbReference type="CDD" id="cd01080">
    <property type="entry name" value="NAD_bind_m-THF_DH_Cyclohyd"/>
    <property type="match status" value="1"/>
</dbReference>
<dbReference type="FunFam" id="3.40.50.10860:FF:000001">
    <property type="entry name" value="Bifunctional protein FolD"/>
    <property type="match status" value="1"/>
</dbReference>
<dbReference type="FunFam" id="3.40.50.720:FF:000094">
    <property type="entry name" value="Bifunctional protein FolD"/>
    <property type="match status" value="1"/>
</dbReference>
<dbReference type="Gene3D" id="3.40.50.10860">
    <property type="entry name" value="Leucine Dehydrogenase, chain A, domain 1"/>
    <property type="match status" value="1"/>
</dbReference>
<dbReference type="Gene3D" id="3.40.50.720">
    <property type="entry name" value="NAD(P)-binding Rossmann-like Domain"/>
    <property type="match status" value="1"/>
</dbReference>
<dbReference type="HAMAP" id="MF_01576">
    <property type="entry name" value="THF_DHG_CYH"/>
    <property type="match status" value="1"/>
</dbReference>
<dbReference type="InterPro" id="IPR046346">
    <property type="entry name" value="Aminoacid_DH-like_N_sf"/>
</dbReference>
<dbReference type="InterPro" id="IPR036291">
    <property type="entry name" value="NAD(P)-bd_dom_sf"/>
</dbReference>
<dbReference type="InterPro" id="IPR000672">
    <property type="entry name" value="THF_DH/CycHdrlase"/>
</dbReference>
<dbReference type="InterPro" id="IPR020630">
    <property type="entry name" value="THF_DH/CycHdrlase_cat_dom"/>
</dbReference>
<dbReference type="InterPro" id="IPR020631">
    <property type="entry name" value="THF_DH/CycHdrlase_NAD-bd_dom"/>
</dbReference>
<dbReference type="NCBIfam" id="NF010772">
    <property type="entry name" value="PRK14175.1"/>
    <property type="match status" value="1"/>
</dbReference>
<dbReference type="PANTHER" id="PTHR48099:SF5">
    <property type="entry name" value="C-1-TETRAHYDROFOLATE SYNTHASE, CYTOPLASMIC"/>
    <property type="match status" value="1"/>
</dbReference>
<dbReference type="PANTHER" id="PTHR48099">
    <property type="entry name" value="C-1-TETRAHYDROFOLATE SYNTHASE, CYTOPLASMIC-RELATED"/>
    <property type="match status" value="1"/>
</dbReference>
<dbReference type="Pfam" id="PF00763">
    <property type="entry name" value="THF_DHG_CYH"/>
    <property type="match status" value="1"/>
</dbReference>
<dbReference type="Pfam" id="PF02882">
    <property type="entry name" value="THF_DHG_CYH_C"/>
    <property type="match status" value="1"/>
</dbReference>
<dbReference type="PRINTS" id="PR00085">
    <property type="entry name" value="THFDHDRGNASE"/>
</dbReference>
<dbReference type="SUPFAM" id="SSF53223">
    <property type="entry name" value="Aminoacid dehydrogenase-like, N-terminal domain"/>
    <property type="match status" value="1"/>
</dbReference>
<dbReference type="SUPFAM" id="SSF51735">
    <property type="entry name" value="NAD(P)-binding Rossmann-fold domains"/>
    <property type="match status" value="1"/>
</dbReference>
<gene>
    <name evidence="1" type="primary">folD</name>
    <name type="ordered locus">SA0915</name>
</gene>
<accession>Q7A697</accession>
<name>FOLD_STAAN</name>
<reference key="1">
    <citation type="journal article" date="2001" name="Lancet">
        <title>Whole genome sequencing of meticillin-resistant Staphylococcus aureus.</title>
        <authorList>
            <person name="Kuroda M."/>
            <person name="Ohta T."/>
            <person name="Uchiyama I."/>
            <person name="Baba T."/>
            <person name="Yuzawa H."/>
            <person name="Kobayashi I."/>
            <person name="Cui L."/>
            <person name="Oguchi A."/>
            <person name="Aoki K."/>
            <person name="Nagai Y."/>
            <person name="Lian J.-Q."/>
            <person name="Ito T."/>
            <person name="Kanamori M."/>
            <person name="Matsumaru H."/>
            <person name="Maruyama A."/>
            <person name="Murakami H."/>
            <person name="Hosoyama A."/>
            <person name="Mizutani-Ui Y."/>
            <person name="Takahashi N.K."/>
            <person name="Sawano T."/>
            <person name="Inoue R."/>
            <person name="Kaito C."/>
            <person name="Sekimizu K."/>
            <person name="Hirakawa H."/>
            <person name="Kuhara S."/>
            <person name="Goto S."/>
            <person name="Yabuzaki J."/>
            <person name="Kanehisa M."/>
            <person name="Yamashita A."/>
            <person name="Oshima K."/>
            <person name="Furuya K."/>
            <person name="Yoshino C."/>
            <person name="Shiba T."/>
            <person name="Hattori M."/>
            <person name="Ogasawara N."/>
            <person name="Hayashi H."/>
            <person name="Hiramatsu K."/>
        </authorList>
    </citation>
    <scope>NUCLEOTIDE SEQUENCE [LARGE SCALE GENOMIC DNA]</scope>
    <source>
        <strain>N315</strain>
    </source>
</reference>
<reference key="2">
    <citation type="journal article" date="2005" name="J. Microbiol. Methods">
        <title>Correlation of proteomic and transcriptomic profiles of Staphylococcus aureus during the post-exponential phase of growth.</title>
        <authorList>
            <person name="Scherl A."/>
            <person name="Francois P."/>
            <person name="Bento M."/>
            <person name="Deshusses J.M."/>
            <person name="Charbonnier Y."/>
            <person name="Converset V."/>
            <person name="Huyghe A."/>
            <person name="Walter N."/>
            <person name="Hoogland C."/>
            <person name="Appel R.D."/>
            <person name="Sanchez J.-C."/>
            <person name="Zimmermann-Ivol C.G."/>
            <person name="Corthals G.L."/>
            <person name="Hochstrasser D.F."/>
            <person name="Schrenzel J."/>
        </authorList>
    </citation>
    <scope>IDENTIFICATION BY MASS SPECTROMETRY</scope>
    <source>
        <strain>N315</strain>
    </source>
</reference>
<reference key="3">
    <citation type="submission" date="2007-10" db="UniProtKB">
        <title>Shotgun proteomic analysis of total and membrane protein extracts of S. aureus strain N315.</title>
        <authorList>
            <person name="Vaezzadeh A.R."/>
            <person name="Deshusses J."/>
            <person name="Lescuyer P."/>
            <person name="Hochstrasser D.F."/>
        </authorList>
    </citation>
    <scope>IDENTIFICATION BY MASS SPECTROMETRY [LARGE SCALE ANALYSIS]</scope>
    <source>
        <strain>N315</strain>
    </source>
</reference>
<proteinExistence type="evidence at protein level"/>